<proteinExistence type="inferred from homology"/>
<feature type="chain" id="PRO_0000240549" description="Probable chorismate pyruvate-lyase">
    <location>
        <begin position="1"/>
        <end position="162"/>
    </location>
</feature>
<feature type="binding site" evidence="1">
    <location>
        <position position="54"/>
    </location>
    <ligand>
        <name>substrate</name>
    </ligand>
</feature>
<feature type="binding site" evidence="1">
    <location>
        <position position="92"/>
    </location>
    <ligand>
        <name>substrate</name>
    </ligand>
</feature>
<feature type="binding site" evidence="1">
    <location>
        <position position="149"/>
    </location>
    <ligand>
        <name>substrate</name>
    </ligand>
</feature>
<sequence>MESWVFERGSLTRRLKAACGADFNVRVIRQGFAHPFPDEALLLKLRSGRRALVREVELRSRERRLVLARSVLPAQTLKGAGRRLAHLGNRPLGEILFASRRPRRHGFEAALAEDRHWRPAVRAGSGSAGPVWGRRSLYSIAGRPLLVAEFFLPAVLSVPESA</sequence>
<protein>
    <recommendedName>
        <fullName evidence="1">Probable chorismate pyruvate-lyase</fullName>
        <shortName evidence="1">CL</shortName>
        <shortName evidence="1">CPL</shortName>
        <ecNumber evidence="1">4.1.3.40</ecNumber>
    </recommendedName>
</protein>
<keyword id="KW-0963">Cytoplasm</keyword>
<keyword id="KW-0456">Lyase</keyword>
<keyword id="KW-0670">Pyruvate</keyword>
<keyword id="KW-1185">Reference proteome</keyword>
<keyword id="KW-0831">Ubiquinone biosynthesis</keyword>
<organism>
    <name type="scientific">Methylococcus capsulatus (strain ATCC 33009 / NCIMB 11132 / Bath)</name>
    <dbReference type="NCBI Taxonomy" id="243233"/>
    <lineage>
        <taxon>Bacteria</taxon>
        <taxon>Pseudomonadati</taxon>
        <taxon>Pseudomonadota</taxon>
        <taxon>Gammaproteobacteria</taxon>
        <taxon>Methylococcales</taxon>
        <taxon>Methylococcaceae</taxon>
        <taxon>Methylococcus</taxon>
    </lineage>
</organism>
<dbReference type="EC" id="4.1.3.40" evidence="1"/>
<dbReference type="EMBL" id="AE017282">
    <property type="protein sequence ID" value="AAU92613.1"/>
    <property type="molecule type" value="Genomic_DNA"/>
</dbReference>
<dbReference type="RefSeq" id="WP_010960616.1">
    <property type="nucleotide sequence ID" value="NC_002977.6"/>
</dbReference>
<dbReference type="SMR" id="Q609A0"/>
<dbReference type="STRING" id="243233.MCA1335"/>
<dbReference type="GeneID" id="88223616"/>
<dbReference type="KEGG" id="mca:MCA1335"/>
<dbReference type="eggNOG" id="COG3161">
    <property type="taxonomic scope" value="Bacteria"/>
</dbReference>
<dbReference type="HOGENOM" id="CLU_096824_3_0_6"/>
<dbReference type="UniPathway" id="UPA00232"/>
<dbReference type="Proteomes" id="UP000006821">
    <property type="component" value="Chromosome"/>
</dbReference>
<dbReference type="GO" id="GO:0005829">
    <property type="term" value="C:cytosol"/>
    <property type="evidence" value="ECO:0007669"/>
    <property type="project" value="TreeGrafter"/>
</dbReference>
<dbReference type="GO" id="GO:0008813">
    <property type="term" value="F:chorismate lyase activity"/>
    <property type="evidence" value="ECO:0007669"/>
    <property type="project" value="UniProtKB-UniRule"/>
</dbReference>
<dbReference type="GO" id="GO:0042866">
    <property type="term" value="P:pyruvate biosynthetic process"/>
    <property type="evidence" value="ECO:0007669"/>
    <property type="project" value="UniProtKB-UniRule"/>
</dbReference>
<dbReference type="GO" id="GO:0006744">
    <property type="term" value="P:ubiquinone biosynthetic process"/>
    <property type="evidence" value="ECO:0007669"/>
    <property type="project" value="UniProtKB-UniRule"/>
</dbReference>
<dbReference type="FunFam" id="3.40.1410.10:FF:000020">
    <property type="entry name" value="Chorismate pyruvate-lyase"/>
    <property type="match status" value="1"/>
</dbReference>
<dbReference type="Gene3D" id="3.40.1410.10">
    <property type="entry name" value="Chorismate lyase-like"/>
    <property type="match status" value="1"/>
</dbReference>
<dbReference type="HAMAP" id="MF_01632">
    <property type="entry name" value="UbiC"/>
    <property type="match status" value="1"/>
</dbReference>
<dbReference type="InterPro" id="IPR007440">
    <property type="entry name" value="Chorismate--pyruvate_lyase"/>
</dbReference>
<dbReference type="InterPro" id="IPR028978">
    <property type="entry name" value="Chorismate_lyase_/UTRA_dom_sf"/>
</dbReference>
<dbReference type="PANTHER" id="PTHR38683">
    <property type="entry name" value="CHORISMATE PYRUVATE-LYASE"/>
    <property type="match status" value="1"/>
</dbReference>
<dbReference type="PANTHER" id="PTHR38683:SF1">
    <property type="entry name" value="CHORISMATE PYRUVATE-LYASE"/>
    <property type="match status" value="1"/>
</dbReference>
<dbReference type="Pfam" id="PF04345">
    <property type="entry name" value="Chor_lyase"/>
    <property type="match status" value="1"/>
</dbReference>
<dbReference type="SUPFAM" id="SSF64288">
    <property type="entry name" value="Chorismate lyase-like"/>
    <property type="match status" value="1"/>
</dbReference>
<name>UBIC_METCA</name>
<comment type="function">
    <text evidence="1">Removes the pyruvyl group from chorismate, with concomitant aromatization of the ring, to provide 4-hydroxybenzoate (4HB) for the ubiquinone pathway.</text>
</comment>
<comment type="catalytic activity">
    <reaction evidence="1">
        <text>chorismate = 4-hydroxybenzoate + pyruvate</text>
        <dbReference type="Rhea" id="RHEA:16505"/>
        <dbReference type="ChEBI" id="CHEBI:15361"/>
        <dbReference type="ChEBI" id="CHEBI:17879"/>
        <dbReference type="ChEBI" id="CHEBI:29748"/>
        <dbReference type="EC" id="4.1.3.40"/>
    </reaction>
</comment>
<comment type="pathway">
    <text evidence="1">Cofactor biosynthesis; ubiquinone biosynthesis.</text>
</comment>
<comment type="subcellular location">
    <subcellularLocation>
        <location evidence="1">Cytoplasm</location>
    </subcellularLocation>
</comment>
<comment type="similarity">
    <text evidence="1">Belongs to the UbiC family.</text>
</comment>
<accession>Q609A0</accession>
<gene>
    <name evidence="1" type="primary">ubiC</name>
    <name type="ordered locus">MCA1335</name>
</gene>
<reference key="1">
    <citation type="journal article" date="2004" name="PLoS Biol.">
        <title>Genomic insights into methanotrophy: the complete genome sequence of Methylococcus capsulatus (Bath).</title>
        <authorList>
            <person name="Ward N.L."/>
            <person name="Larsen O."/>
            <person name="Sakwa J."/>
            <person name="Bruseth L."/>
            <person name="Khouri H.M."/>
            <person name="Durkin A.S."/>
            <person name="Dimitrov G."/>
            <person name="Jiang L."/>
            <person name="Scanlan D."/>
            <person name="Kang K.H."/>
            <person name="Lewis M.R."/>
            <person name="Nelson K.E."/>
            <person name="Methe B.A."/>
            <person name="Wu M."/>
            <person name="Heidelberg J.F."/>
            <person name="Paulsen I.T."/>
            <person name="Fouts D.E."/>
            <person name="Ravel J."/>
            <person name="Tettelin H."/>
            <person name="Ren Q."/>
            <person name="Read T.D."/>
            <person name="DeBoy R.T."/>
            <person name="Seshadri R."/>
            <person name="Salzberg S.L."/>
            <person name="Jensen H.B."/>
            <person name="Birkeland N.K."/>
            <person name="Nelson W.C."/>
            <person name="Dodson R.J."/>
            <person name="Grindhaug S.H."/>
            <person name="Holt I.E."/>
            <person name="Eidhammer I."/>
            <person name="Jonasen I."/>
            <person name="Vanaken S."/>
            <person name="Utterback T.R."/>
            <person name="Feldblyum T.V."/>
            <person name="Fraser C.M."/>
            <person name="Lillehaug J.R."/>
            <person name="Eisen J.A."/>
        </authorList>
    </citation>
    <scope>NUCLEOTIDE SEQUENCE [LARGE SCALE GENOMIC DNA]</scope>
    <source>
        <strain>ATCC 33009 / NCIMB 11132 / Bath</strain>
    </source>
</reference>
<evidence type="ECO:0000255" key="1">
    <source>
        <dbReference type="HAMAP-Rule" id="MF_01632"/>
    </source>
</evidence>